<name>PXPA_STAAE</name>
<organism>
    <name type="scientific">Staphylococcus aureus (strain Newman)</name>
    <dbReference type="NCBI Taxonomy" id="426430"/>
    <lineage>
        <taxon>Bacteria</taxon>
        <taxon>Bacillati</taxon>
        <taxon>Bacillota</taxon>
        <taxon>Bacilli</taxon>
        <taxon>Bacillales</taxon>
        <taxon>Staphylococcaceae</taxon>
        <taxon>Staphylococcus</taxon>
    </lineage>
</organism>
<keyword id="KW-0067">ATP-binding</keyword>
<keyword id="KW-0378">Hydrolase</keyword>
<keyword id="KW-0547">Nucleotide-binding</keyword>
<accession>A6QHE6</accession>
<feature type="chain" id="PRO_1000072747" description="5-oxoprolinase subunit A">
    <location>
        <begin position="1"/>
        <end position="250"/>
    </location>
</feature>
<dbReference type="EC" id="3.5.2.9" evidence="1"/>
<dbReference type="EMBL" id="AP009351">
    <property type="protein sequence ID" value="BAF67778.1"/>
    <property type="molecule type" value="Genomic_DNA"/>
</dbReference>
<dbReference type="RefSeq" id="WP_001261795.1">
    <property type="nucleotide sequence ID" value="NZ_JBBIAE010000001.1"/>
</dbReference>
<dbReference type="SMR" id="A6QHE6"/>
<dbReference type="KEGG" id="sae:NWMN_1506"/>
<dbReference type="HOGENOM" id="CLU_069535_0_0_9"/>
<dbReference type="Proteomes" id="UP000006386">
    <property type="component" value="Chromosome"/>
</dbReference>
<dbReference type="GO" id="GO:0017168">
    <property type="term" value="F:5-oxoprolinase (ATP-hydrolyzing) activity"/>
    <property type="evidence" value="ECO:0007669"/>
    <property type="project" value="UniProtKB-UniRule"/>
</dbReference>
<dbReference type="GO" id="GO:0005524">
    <property type="term" value="F:ATP binding"/>
    <property type="evidence" value="ECO:0007669"/>
    <property type="project" value="UniProtKB-UniRule"/>
</dbReference>
<dbReference type="GO" id="GO:0005975">
    <property type="term" value="P:carbohydrate metabolic process"/>
    <property type="evidence" value="ECO:0007669"/>
    <property type="project" value="InterPro"/>
</dbReference>
<dbReference type="CDD" id="cd10787">
    <property type="entry name" value="LamB_YcsF_like"/>
    <property type="match status" value="1"/>
</dbReference>
<dbReference type="Gene3D" id="3.20.20.370">
    <property type="entry name" value="Glycoside hydrolase/deacetylase"/>
    <property type="match status" value="1"/>
</dbReference>
<dbReference type="HAMAP" id="MF_00691">
    <property type="entry name" value="PxpA"/>
    <property type="match status" value="1"/>
</dbReference>
<dbReference type="InterPro" id="IPR011330">
    <property type="entry name" value="Glyco_hydro/deAcase_b/a-brl"/>
</dbReference>
<dbReference type="InterPro" id="IPR005501">
    <property type="entry name" value="LamB/YcsF/PxpA-like"/>
</dbReference>
<dbReference type="NCBIfam" id="NF003813">
    <property type="entry name" value="PRK05406.1-2"/>
    <property type="match status" value="1"/>
</dbReference>
<dbReference type="NCBIfam" id="NF003814">
    <property type="entry name" value="PRK05406.1-3"/>
    <property type="match status" value="1"/>
</dbReference>
<dbReference type="NCBIfam" id="NF003816">
    <property type="entry name" value="PRK05406.1-5"/>
    <property type="match status" value="1"/>
</dbReference>
<dbReference type="PANTHER" id="PTHR30292:SF0">
    <property type="entry name" value="5-OXOPROLINASE SUBUNIT A"/>
    <property type="match status" value="1"/>
</dbReference>
<dbReference type="PANTHER" id="PTHR30292">
    <property type="entry name" value="UNCHARACTERIZED PROTEIN YBGL-RELATED"/>
    <property type="match status" value="1"/>
</dbReference>
<dbReference type="Pfam" id="PF03746">
    <property type="entry name" value="LamB_YcsF"/>
    <property type="match status" value="1"/>
</dbReference>
<dbReference type="SUPFAM" id="SSF88713">
    <property type="entry name" value="Glycoside hydrolase/deacetylase"/>
    <property type="match status" value="1"/>
</dbReference>
<evidence type="ECO:0000255" key="1">
    <source>
        <dbReference type="HAMAP-Rule" id="MF_00691"/>
    </source>
</evidence>
<gene>
    <name evidence="1" type="primary">pxpA</name>
    <name type="ordered locus">NWMN_1506</name>
</gene>
<proteinExistence type="inferred from homology"/>
<protein>
    <recommendedName>
        <fullName evidence="1">5-oxoprolinase subunit A</fullName>
        <shortName evidence="1">5-OPase subunit A</shortName>
        <ecNumber evidence="1">3.5.2.9</ecNumber>
    </recommendedName>
    <alternativeName>
        <fullName evidence="1">5-oxoprolinase (ATP-hydrolyzing) subunit A</fullName>
    </alternativeName>
</protein>
<reference key="1">
    <citation type="journal article" date="2008" name="J. Bacteriol.">
        <title>Genome sequence of Staphylococcus aureus strain Newman and comparative analysis of staphylococcal genomes: polymorphism and evolution of two major pathogenicity islands.</title>
        <authorList>
            <person name="Baba T."/>
            <person name="Bae T."/>
            <person name="Schneewind O."/>
            <person name="Takeuchi F."/>
            <person name="Hiramatsu K."/>
        </authorList>
    </citation>
    <scope>NUCLEOTIDE SEQUENCE [LARGE SCALE GENOMIC DNA]</scope>
    <source>
        <strain>Newman</strain>
    </source>
</reference>
<comment type="function">
    <text evidence="1">Catalyzes the cleavage of 5-oxoproline to form L-glutamate coupled to the hydrolysis of ATP to ADP and inorganic phosphate.</text>
</comment>
<comment type="catalytic activity">
    <reaction evidence="1">
        <text>5-oxo-L-proline + ATP + 2 H2O = L-glutamate + ADP + phosphate + H(+)</text>
        <dbReference type="Rhea" id="RHEA:10348"/>
        <dbReference type="ChEBI" id="CHEBI:15377"/>
        <dbReference type="ChEBI" id="CHEBI:15378"/>
        <dbReference type="ChEBI" id="CHEBI:29985"/>
        <dbReference type="ChEBI" id="CHEBI:30616"/>
        <dbReference type="ChEBI" id="CHEBI:43474"/>
        <dbReference type="ChEBI" id="CHEBI:58402"/>
        <dbReference type="ChEBI" id="CHEBI:456216"/>
        <dbReference type="EC" id="3.5.2.9"/>
    </reaction>
</comment>
<comment type="subunit">
    <text evidence="1">Forms a complex composed of PxpA, PxpB and PxpC.</text>
</comment>
<comment type="similarity">
    <text evidence="1">Belongs to the LamB/PxpA family.</text>
</comment>
<sequence length="250" mass="27448">MRVDLNCDLGEAFGNYSFGGDHQIIPLITSANVACGFHAGDENVMNETVKLAKAHNVAVGAHPGLPDLKGFGRRNIDISNDEIYNLMIYQLGALQGFCRIHQVKINHVKPHGALYQMGAKDREIANVIAQAVYDFDPSLVLVGLANSYLISEAKNVGLITASEVFADRRYEDDGQLVSRKESDAVITDTDEALKQVLKMVKENKVISKNNKEVTLQADTICVHGDGEHALLFVSKIREILMKEGIDIQSL</sequence>